<keyword id="KW-0067">ATP-binding</keyword>
<keyword id="KW-0436">Ligase</keyword>
<keyword id="KW-0547">Nucleotide-binding</keyword>
<keyword id="KW-0554">One-carbon metabolism</keyword>
<keyword id="KW-1185">Reference proteome</keyword>
<protein>
    <recommendedName>
        <fullName evidence="1">Formate--tetrahydrofolate ligase</fullName>
        <ecNumber evidence="1">6.3.4.3</ecNumber>
    </recommendedName>
    <alternativeName>
        <fullName evidence="1">Formyltetrahydrofolate synthetase</fullName>
        <shortName evidence="1">FHS</shortName>
        <shortName evidence="1">FTHFS</shortName>
    </alternativeName>
</protein>
<evidence type="ECO:0000255" key="1">
    <source>
        <dbReference type="HAMAP-Rule" id="MF_01543"/>
    </source>
</evidence>
<sequence>MAYKSDIEIAREAKKRPIQEIGEKIGIGSDDLLPYGHDKAKVSQSFINSVQDKPNGRLVLVTAINPTPAGEGKTTTTVGLGDGLNHIGKNAMICIREASLGPNFGMKGGAAGGGYAQVVPMEDMNLHFTGDFHAITSAHSLLSAMIDNHIYWGNEAEIDVRRVQWRRVVDMNDRALRQITASLGGVANGFPREAGFDITVASEVMAILCLAKDLKDLEKRLGDMIVAYRRDRSPVFCRDIKAQGAMTVLLKDAMQPNLVQTLENNPAFVHGGPFANIAHGCNSVIATTTALKLADYVVTEAGFGADLGAEKFMNIKCRKAGIAPSVVVCVATVRAMKMNGGVAKADLGAENVDAVKKGCPNLGRHIENLKSFGVPVIVAINHFVTDTDAEVEAIKSYVSEHGAEAVLSRHWELGSEGSADLARKVVEVAEKDSANFAPIYPDDMPLAEKVQTIAKRIYRADEALMDKKVRDQLKLWEEQGYGHLPVCMAKTQYSFSTDPNLRGAPTGHSVPVREVRLSAGAGFVVVVCGEIMTMPGLPRVPSAENIHLNEDGQIEGLF</sequence>
<dbReference type="EC" id="6.3.4.3" evidence="1"/>
<dbReference type="EMBL" id="CP000362">
    <property type="protein sequence ID" value="ABG33671.1"/>
    <property type="molecule type" value="Genomic_DNA"/>
</dbReference>
<dbReference type="RefSeq" id="WP_011570281.1">
    <property type="nucleotide sequence ID" value="NC_008209.1"/>
</dbReference>
<dbReference type="SMR" id="Q160C2"/>
<dbReference type="STRING" id="375451.RD1_4235"/>
<dbReference type="KEGG" id="rde:RD1_4235"/>
<dbReference type="eggNOG" id="COG2759">
    <property type="taxonomic scope" value="Bacteria"/>
</dbReference>
<dbReference type="HOGENOM" id="CLU_003601_3_3_5"/>
<dbReference type="OrthoDB" id="9761733at2"/>
<dbReference type="UniPathway" id="UPA00193"/>
<dbReference type="Proteomes" id="UP000007029">
    <property type="component" value="Chromosome"/>
</dbReference>
<dbReference type="GO" id="GO:0005524">
    <property type="term" value="F:ATP binding"/>
    <property type="evidence" value="ECO:0007669"/>
    <property type="project" value="UniProtKB-UniRule"/>
</dbReference>
<dbReference type="GO" id="GO:0004329">
    <property type="term" value="F:formate-tetrahydrofolate ligase activity"/>
    <property type="evidence" value="ECO:0007669"/>
    <property type="project" value="UniProtKB-UniRule"/>
</dbReference>
<dbReference type="GO" id="GO:0035999">
    <property type="term" value="P:tetrahydrofolate interconversion"/>
    <property type="evidence" value="ECO:0007669"/>
    <property type="project" value="UniProtKB-UniRule"/>
</dbReference>
<dbReference type="CDD" id="cd00477">
    <property type="entry name" value="FTHFS"/>
    <property type="match status" value="1"/>
</dbReference>
<dbReference type="FunFam" id="3.30.1510.10:FF:000001">
    <property type="entry name" value="Formate--tetrahydrofolate ligase"/>
    <property type="match status" value="1"/>
</dbReference>
<dbReference type="FunFam" id="3.10.410.10:FF:000001">
    <property type="entry name" value="Putative formate--tetrahydrofolate ligase"/>
    <property type="match status" value="1"/>
</dbReference>
<dbReference type="Gene3D" id="3.30.1510.10">
    <property type="entry name" value="Domain 2, N(10)-formyltetrahydrofolate synthetase"/>
    <property type="match status" value="1"/>
</dbReference>
<dbReference type="Gene3D" id="3.10.410.10">
    <property type="entry name" value="Formyltetrahydrofolate synthetase, domain 3"/>
    <property type="match status" value="1"/>
</dbReference>
<dbReference type="Gene3D" id="3.40.50.300">
    <property type="entry name" value="P-loop containing nucleotide triphosphate hydrolases"/>
    <property type="match status" value="1"/>
</dbReference>
<dbReference type="HAMAP" id="MF_01543">
    <property type="entry name" value="FTHFS"/>
    <property type="match status" value="1"/>
</dbReference>
<dbReference type="InterPro" id="IPR000559">
    <property type="entry name" value="Formate_THF_ligase"/>
</dbReference>
<dbReference type="InterPro" id="IPR020628">
    <property type="entry name" value="Formate_THF_ligase_CS"/>
</dbReference>
<dbReference type="InterPro" id="IPR027417">
    <property type="entry name" value="P-loop_NTPase"/>
</dbReference>
<dbReference type="NCBIfam" id="NF010030">
    <property type="entry name" value="PRK13505.1"/>
    <property type="match status" value="1"/>
</dbReference>
<dbReference type="Pfam" id="PF01268">
    <property type="entry name" value="FTHFS"/>
    <property type="match status" value="1"/>
</dbReference>
<dbReference type="SUPFAM" id="SSF52540">
    <property type="entry name" value="P-loop containing nucleoside triphosphate hydrolases"/>
    <property type="match status" value="1"/>
</dbReference>
<dbReference type="PROSITE" id="PS00721">
    <property type="entry name" value="FTHFS_1"/>
    <property type="match status" value="1"/>
</dbReference>
<dbReference type="PROSITE" id="PS00722">
    <property type="entry name" value="FTHFS_2"/>
    <property type="match status" value="1"/>
</dbReference>
<feature type="chain" id="PRO_0000300536" description="Formate--tetrahydrofolate ligase">
    <location>
        <begin position="1"/>
        <end position="558"/>
    </location>
</feature>
<feature type="binding site" evidence="1">
    <location>
        <begin position="67"/>
        <end position="74"/>
    </location>
    <ligand>
        <name>ATP</name>
        <dbReference type="ChEBI" id="CHEBI:30616"/>
    </ligand>
</feature>
<accession>Q160C2</accession>
<proteinExistence type="inferred from homology"/>
<gene>
    <name evidence="1" type="primary">fhs</name>
    <name type="ordered locus">RD1_4235</name>
</gene>
<name>FTHS_ROSDO</name>
<organism>
    <name type="scientific">Roseobacter denitrificans (strain ATCC 33942 / OCh 114)</name>
    <name type="common">Erythrobacter sp. (strain OCh 114)</name>
    <name type="synonym">Roseobacter denitrificans</name>
    <dbReference type="NCBI Taxonomy" id="375451"/>
    <lineage>
        <taxon>Bacteria</taxon>
        <taxon>Pseudomonadati</taxon>
        <taxon>Pseudomonadota</taxon>
        <taxon>Alphaproteobacteria</taxon>
        <taxon>Rhodobacterales</taxon>
        <taxon>Roseobacteraceae</taxon>
        <taxon>Roseobacter</taxon>
    </lineage>
</organism>
<comment type="catalytic activity">
    <reaction evidence="1">
        <text>(6S)-5,6,7,8-tetrahydrofolate + formate + ATP = (6R)-10-formyltetrahydrofolate + ADP + phosphate</text>
        <dbReference type="Rhea" id="RHEA:20221"/>
        <dbReference type="ChEBI" id="CHEBI:15740"/>
        <dbReference type="ChEBI" id="CHEBI:30616"/>
        <dbReference type="ChEBI" id="CHEBI:43474"/>
        <dbReference type="ChEBI" id="CHEBI:57453"/>
        <dbReference type="ChEBI" id="CHEBI:195366"/>
        <dbReference type="ChEBI" id="CHEBI:456216"/>
        <dbReference type="EC" id="6.3.4.3"/>
    </reaction>
</comment>
<comment type="pathway">
    <text evidence="1">One-carbon metabolism; tetrahydrofolate interconversion.</text>
</comment>
<comment type="similarity">
    <text evidence="1">Belongs to the formate--tetrahydrofolate ligase family.</text>
</comment>
<reference key="1">
    <citation type="journal article" date="2007" name="J. Bacteriol.">
        <title>The complete genome sequence of Roseobacter denitrificans reveals a mixotrophic rather than photosynthetic metabolism.</title>
        <authorList>
            <person name="Swingley W.D."/>
            <person name="Sadekar S."/>
            <person name="Mastrian S.D."/>
            <person name="Matthies H.J."/>
            <person name="Hao J."/>
            <person name="Ramos H."/>
            <person name="Acharya C.R."/>
            <person name="Conrad A.L."/>
            <person name="Taylor H.L."/>
            <person name="Dejesa L.C."/>
            <person name="Shah M.K."/>
            <person name="O'Huallachain M.E."/>
            <person name="Lince M.T."/>
            <person name="Blankenship R.E."/>
            <person name="Beatty J.T."/>
            <person name="Touchman J.W."/>
        </authorList>
    </citation>
    <scope>NUCLEOTIDE SEQUENCE [LARGE SCALE GENOMIC DNA]</scope>
    <source>
        <strain>ATCC 33942 / OCh 114</strain>
    </source>
</reference>